<organism>
    <name type="scientific">Homo sapiens</name>
    <name type="common">Human</name>
    <dbReference type="NCBI Taxonomy" id="9606"/>
    <lineage>
        <taxon>Eukaryota</taxon>
        <taxon>Metazoa</taxon>
        <taxon>Chordata</taxon>
        <taxon>Craniata</taxon>
        <taxon>Vertebrata</taxon>
        <taxon>Euteleostomi</taxon>
        <taxon>Mammalia</taxon>
        <taxon>Eutheria</taxon>
        <taxon>Euarchontoglires</taxon>
        <taxon>Primates</taxon>
        <taxon>Haplorrhini</taxon>
        <taxon>Catarrhini</taxon>
        <taxon>Hominidae</taxon>
        <taxon>Homo</taxon>
    </lineage>
</organism>
<accession>Q499Z3</accession>
<accession>A8K8D1</accession>
<accession>Q49AG8</accession>
<accession>Q5VW72</accession>
<accession>Q5VW74</accession>
<accession>Q8N7V7</accession>
<accession>Q8TCH6</accession>
<accession>Q8WVZ8</accession>
<gene>
    <name type="primary">SLFNL1</name>
</gene>
<dbReference type="EMBL" id="AK074458">
    <property type="protein sequence ID" value="BAB85090.1"/>
    <property type="molecule type" value="mRNA"/>
</dbReference>
<dbReference type="EMBL" id="AK097609">
    <property type="status" value="NOT_ANNOTATED_CDS"/>
    <property type="molecule type" value="mRNA"/>
</dbReference>
<dbReference type="EMBL" id="AK292296">
    <property type="protein sequence ID" value="BAF84985.1"/>
    <property type="molecule type" value="mRNA"/>
</dbReference>
<dbReference type="EMBL" id="AL391730">
    <property type="status" value="NOT_ANNOTATED_CDS"/>
    <property type="molecule type" value="Genomic_DNA"/>
</dbReference>
<dbReference type="EMBL" id="BC022037">
    <property type="protein sequence ID" value="AAH22037.2"/>
    <property type="molecule type" value="mRNA"/>
</dbReference>
<dbReference type="EMBL" id="BC037879">
    <property type="protein sequence ID" value="AAH37879.1"/>
    <property type="molecule type" value="mRNA"/>
</dbReference>
<dbReference type="EMBL" id="BC050353">
    <property type="protein sequence ID" value="AAH50353.1"/>
    <property type="molecule type" value="mRNA"/>
</dbReference>
<dbReference type="CCDS" id="CCDS460.1">
    <molecule id="Q499Z3-1"/>
</dbReference>
<dbReference type="CCDS" id="CCDS72766.1">
    <molecule id="Q499Z3-2"/>
</dbReference>
<dbReference type="CCDS" id="CCDS90925.1">
    <molecule id="Q499Z3-3"/>
</dbReference>
<dbReference type="RefSeq" id="NP_001161719.1">
    <molecule id="Q499Z3-1"/>
    <property type="nucleotide sequence ID" value="NM_001168247.3"/>
</dbReference>
<dbReference type="RefSeq" id="NP_001287788.1">
    <molecule id="Q499Z3-2"/>
    <property type="nucleotide sequence ID" value="NM_001300859.2"/>
</dbReference>
<dbReference type="RefSeq" id="NP_001364461.1">
    <molecule id="Q499Z3-1"/>
    <property type="nucleotide sequence ID" value="NM_001377532.1"/>
</dbReference>
<dbReference type="RefSeq" id="NP_001381260.1">
    <molecule id="Q499Z3-3"/>
    <property type="nucleotide sequence ID" value="NM_001394331.1"/>
</dbReference>
<dbReference type="RefSeq" id="NP_659427.3">
    <molecule id="Q499Z3-1"/>
    <property type="nucleotide sequence ID" value="NM_144990.3"/>
</dbReference>
<dbReference type="RefSeq" id="XP_005270654.1">
    <property type="nucleotide sequence ID" value="XM_005270597.2"/>
</dbReference>
<dbReference type="RefSeq" id="XP_005270655.1">
    <molecule id="Q499Z3-1"/>
    <property type="nucleotide sequence ID" value="XM_005270598.2"/>
</dbReference>
<dbReference type="RefSeq" id="XP_005270656.1">
    <molecule id="Q499Z3-1"/>
    <property type="nucleotide sequence ID" value="XM_005270599.3"/>
</dbReference>
<dbReference type="RefSeq" id="XP_006710495.1">
    <property type="nucleotide sequence ID" value="XM_006710432.3"/>
</dbReference>
<dbReference type="RefSeq" id="XP_011539245.1">
    <property type="nucleotide sequence ID" value="XM_011540943.1"/>
</dbReference>
<dbReference type="RefSeq" id="XP_011539247.1">
    <molecule id="Q499Z3-1"/>
    <property type="nucleotide sequence ID" value="XM_011540945.3"/>
</dbReference>
<dbReference type="RefSeq" id="XP_011539249.1">
    <molecule id="Q499Z3-1"/>
    <property type="nucleotide sequence ID" value="XM_011540947.1"/>
</dbReference>
<dbReference type="RefSeq" id="XP_011539250.1">
    <molecule id="Q499Z3-1"/>
    <property type="nucleotide sequence ID" value="XM_011540948.3"/>
</dbReference>
<dbReference type="RefSeq" id="XP_011539251.1">
    <molecule id="Q499Z3-1"/>
    <property type="nucleotide sequence ID" value="XM_011540949.3"/>
</dbReference>
<dbReference type="RefSeq" id="XP_011539252.1">
    <property type="nucleotide sequence ID" value="XM_011540950.1"/>
</dbReference>
<dbReference type="RefSeq" id="XP_011539253.1">
    <molecule id="Q499Z3-1"/>
    <property type="nucleotide sequence ID" value="XM_011540951.2"/>
</dbReference>
<dbReference type="RefSeq" id="XP_011539254.1">
    <molecule id="Q499Z3-1"/>
    <property type="nucleotide sequence ID" value="XM_011540952.3"/>
</dbReference>
<dbReference type="RefSeq" id="XP_011539255.1">
    <property type="nucleotide sequence ID" value="XM_011540953.2"/>
</dbReference>
<dbReference type="RefSeq" id="XP_011539256.1">
    <property type="nucleotide sequence ID" value="XM_011540954.1"/>
</dbReference>
<dbReference type="RefSeq" id="XP_016856062.1">
    <property type="nucleotide sequence ID" value="XM_017000573.1"/>
</dbReference>
<dbReference type="RefSeq" id="XP_047304721.1">
    <molecule id="Q499Z3-1"/>
    <property type="nucleotide sequence ID" value="XM_047448765.1"/>
</dbReference>
<dbReference type="RefSeq" id="XP_047304722.1">
    <molecule id="Q499Z3-1"/>
    <property type="nucleotide sequence ID" value="XM_047448766.1"/>
</dbReference>
<dbReference type="RefSeq" id="XP_047304729.1">
    <molecule id="Q499Z3-1"/>
    <property type="nucleotide sequence ID" value="XM_047448773.1"/>
</dbReference>
<dbReference type="RefSeq" id="XP_047304734.1">
    <molecule id="Q499Z3-2"/>
    <property type="nucleotide sequence ID" value="XM_047448778.1"/>
</dbReference>
<dbReference type="BioGRID" id="128306">
    <property type="interactions" value="2"/>
</dbReference>
<dbReference type="STRING" id="9606.ENSP00000352299"/>
<dbReference type="iPTMnet" id="Q499Z3"/>
<dbReference type="PhosphoSitePlus" id="Q499Z3"/>
<dbReference type="BioMuta" id="SLFNL1"/>
<dbReference type="DMDM" id="143585411"/>
<dbReference type="MassIVE" id="Q499Z3"/>
<dbReference type="PaxDb" id="9606-ENSP00000352299"/>
<dbReference type="PeptideAtlas" id="Q499Z3"/>
<dbReference type="ProteomicsDB" id="62007">
    <molecule id="Q499Z3-1"/>
</dbReference>
<dbReference type="ProteomicsDB" id="62008">
    <molecule id="Q499Z3-2"/>
</dbReference>
<dbReference type="ProteomicsDB" id="62009">
    <molecule id="Q499Z3-3"/>
</dbReference>
<dbReference type="ProteomicsDB" id="62010">
    <molecule id="Q499Z3-4"/>
</dbReference>
<dbReference type="Antibodypedia" id="32165">
    <property type="antibodies" value="277 antibodies from 24 providers"/>
</dbReference>
<dbReference type="DNASU" id="200172"/>
<dbReference type="Ensembl" id="ENST00000302946.13">
    <molecule id="Q499Z3-1"/>
    <property type="protein sequence ID" value="ENSP00000304401.8"/>
    <property type="gene ID" value="ENSG00000171790.16"/>
</dbReference>
<dbReference type="Ensembl" id="ENST00000359345.5">
    <molecule id="Q499Z3-1"/>
    <property type="protein sequence ID" value="ENSP00000352299.1"/>
    <property type="gene ID" value="ENSG00000171790.16"/>
</dbReference>
<dbReference type="Ensembl" id="ENST00000372611.5">
    <molecule id="Q499Z3-2"/>
    <property type="protein sequence ID" value="ENSP00000361694.1"/>
    <property type="gene ID" value="ENSG00000171790.16"/>
</dbReference>
<dbReference type="Ensembl" id="ENST00000372613.6">
    <molecule id="Q499Z3-3"/>
    <property type="protein sequence ID" value="ENSP00000361696.2"/>
    <property type="gene ID" value="ENSG00000171790.16"/>
</dbReference>
<dbReference type="Ensembl" id="ENST00000439569.2">
    <molecule id="Q499Z3-1"/>
    <property type="protein sequence ID" value="ENSP00000398938.2"/>
    <property type="gene ID" value="ENSG00000171790.16"/>
</dbReference>
<dbReference type="GeneID" id="200172"/>
<dbReference type="KEGG" id="hsa:200172"/>
<dbReference type="MANE-Select" id="ENST00000302946.13">
    <property type="protein sequence ID" value="ENSP00000304401.8"/>
    <property type="RefSeq nucleotide sequence ID" value="NM_144990.4"/>
    <property type="RefSeq protein sequence ID" value="NP_659427.3"/>
</dbReference>
<dbReference type="UCSC" id="uc001cgn.3">
    <molecule id="Q499Z3-1"/>
    <property type="organism name" value="human"/>
</dbReference>
<dbReference type="AGR" id="HGNC:26313"/>
<dbReference type="CTD" id="200172"/>
<dbReference type="DisGeNET" id="200172"/>
<dbReference type="GeneCards" id="SLFNL1"/>
<dbReference type="HGNC" id="HGNC:26313">
    <property type="gene designation" value="SLFNL1"/>
</dbReference>
<dbReference type="HPA" id="ENSG00000171790">
    <property type="expression patterns" value="Tissue enriched (testis)"/>
</dbReference>
<dbReference type="neXtProt" id="NX_Q499Z3"/>
<dbReference type="OpenTargets" id="ENSG00000171790"/>
<dbReference type="PharmGKB" id="PA144596362"/>
<dbReference type="VEuPathDB" id="HostDB:ENSG00000171790"/>
<dbReference type="eggNOG" id="ENOG502QTT1">
    <property type="taxonomic scope" value="Eukaryota"/>
</dbReference>
<dbReference type="GeneTree" id="ENSGT00410000025651"/>
<dbReference type="HOGENOM" id="CLU_034269_0_0_1"/>
<dbReference type="InParanoid" id="Q499Z3"/>
<dbReference type="OMA" id="PISCTCC"/>
<dbReference type="OrthoDB" id="10259112at2759"/>
<dbReference type="PAN-GO" id="Q499Z3">
    <property type="GO annotations" value="0 GO annotations based on evolutionary models"/>
</dbReference>
<dbReference type="PhylomeDB" id="Q499Z3"/>
<dbReference type="TreeFam" id="TF337569"/>
<dbReference type="PathwayCommons" id="Q499Z3"/>
<dbReference type="BioGRID-ORCS" id="200172">
    <property type="hits" value="43 hits in 1146 CRISPR screens"/>
</dbReference>
<dbReference type="ChiTaRS" id="SLFNL1">
    <property type="organism name" value="human"/>
</dbReference>
<dbReference type="GenomeRNAi" id="200172"/>
<dbReference type="Pharos" id="Q499Z3">
    <property type="development level" value="Tdark"/>
</dbReference>
<dbReference type="PRO" id="PR:Q499Z3"/>
<dbReference type="Proteomes" id="UP000005640">
    <property type="component" value="Chromosome 1"/>
</dbReference>
<dbReference type="RNAct" id="Q499Z3">
    <property type="molecule type" value="protein"/>
</dbReference>
<dbReference type="Bgee" id="ENSG00000171790">
    <property type="expression patterns" value="Expressed in sperm and 131 other cell types or tissues"/>
</dbReference>
<dbReference type="ExpressionAtlas" id="Q499Z3">
    <property type="expression patterns" value="baseline and differential"/>
</dbReference>
<dbReference type="GO" id="GO:0005524">
    <property type="term" value="F:ATP binding"/>
    <property type="evidence" value="ECO:0007669"/>
    <property type="project" value="UniProtKB-KW"/>
</dbReference>
<dbReference type="Gene3D" id="3.30.950.30">
    <property type="entry name" value="Schlafen, AAA domain"/>
    <property type="match status" value="1"/>
</dbReference>
<dbReference type="InterPro" id="IPR029684">
    <property type="entry name" value="Schlafen"/>
</dbReference>
<dbReference type="InterPro" id="IPR007421">
    <property type="entry name" value="Schlafen_AlbA_2_dom"/>
</dbReference>
<dbReference type="InterPro" id="IPR038461">
    <property type="entry name" value="Schlafen_AlbA_2_dom_sf"/>
</dbReference>
<dbReference type="PANTHER" id="PTHR12155">
    <property type="entry name" value="SCHLAFEN"/>
    <property type="match status" value="1"/>
</dbReference>
<dbReference type="PANTHER" id="PTHR12155:SF29">
    <property type="entry name" value="SCHLAFEN-LIKE PROTEIN 1"/>
    <property type="match status" value="1"/>
</dbReference>
<dbReference type="Pfam" id="PF04326">
    <property type="entry name" value="SLFN_AlbA_2"/>
    <property type="match status" value="1"/>
</dbReference>
<name>SLNL1_HUMAN</name>
<feature type="chain" id="PRO_0000282998" description="Schlafen-like protein 1">
    <location>
        <begin position="1"/>
        <end position="407"/>
    </location>
</feature>
<feature type="region of interest" description="Disordered" evidence="2">
    <location>
        <begin position="1"/>
        <end position="28"/>
    </location>
</feature>
<feature type="region of interest" description="Disordered" evidence="2">
    <location>
        <begin position="137"/>
        <end position="191"/>
    </location>
</feature>
<feature type="coiled-coil region" evidence="1">
    <location>
        <begin position="366"/>
        <end position="398"/>
    </location>
</feature>
<feature type="compositionally biased region" description="Low complexity" evidence="2">
    <location>
        <begin position="155"/>
        <end position="167"/>
    </location>
</feature>
<feature type="compositionally biased region" description="Polar residues" evidence="2">
    <location>
        <begin position="181"/>
        <end position="190"/>
    </location>
</feature>
<feature type="binding site" evidence="1">
    <location>
        <begin position="261"/>
        <end position="268"/>
    </location>
    <ligand>
        <name>ATP</name>
        <dbReference type="ChEBI" id="CHEBI:30616"/>
    </ligand>
</feature>
<feature type="splice variant" id="VSP_024275" description="In isoform 4." evidence="5">
    <original>EKEEEEEDSGLSPGPSPGSGVPLPTWPTHTLPDRPQAQQLQSCQGRPSGVCSDSAIVHQQIVGKDQLFQGAFLGSETRNMEFKRGSGEYLSLAFKHHVRRYVCAFLNSEGGSLLV</original>
    <variation>VSGTFPKQAPKPHPKGEPLSGSGLQSGDGGVSLGKQGQICKLGGCHSNDHGLRLVLPAFSGKNSLPQAQARRLCEERPRGDLLSLGPFTFQPLGLGDPRRHRGPDFLLGPTHLFN</variation>
    <location>
        <begin position="146"/>
        <end position="260"/>
    </location>
</feature>
<feature type="splice variant" id="VSP_024276" description="In isoform 2." evidence="5">
    <location>
        <begin position="146"/>
        <end position="204"/>
    </location>
</feature>
<feature type="splice variant" id="VSP_024277" description="In isoform 4." evidence="5">
    <location>
        <begin position="261"/>
        <end position="407"/>
    </location>
</feature>
<feature type="splice variant" id="VSP_024278" description="In isoform 3." evidence="6">
    <location>
        <begin position="320"/>
        <end position="367"/>
    </location>
</feature>
<feature type="sequence variant" id="VAR_031459" description="In dbSNP:rs1138293." evidence="3">
    <original>A</original>
    <variation>T</variation>
    <location>
        <position position="30"/>
    </location>
</feature>
<feature type="sequence variant" id="VAR_031460" description="In dbSNP:rs17851964." evidence="4">
    <original>R</original>
    <variation>S</variation>
    <location>
        <position position="128"/>
    </location>
</feature>
<feature type="sequence variant" id="VAR_031461" description="In dbSNP:rs3738368.">
    <original>R</original>
    <variation>T</variation>
    <location>
        <position position="144"/>
    </location>
</feature>
<feature type="sequence conflict" description="In Ref. 3; AAH50353." evidence="7" ref="3">
    <original>V</original>
    <variation>I</variation>
    <location>
        <position position="100"/>
    </location>
</feature>
<feature type="sequence conflict" description="In Ref. 3; AAH37879." evidence="7" ref="3">
    <original>R</original>
    <variation>S</variation>
    <location>
        <position position="280"/>
    </location>
</feature>
<protein>
    <recommendedName>
        <fullName>Schlafen-like protein 1</fullName>
    </recommendedName>
</protein>
<comment type="alternative products">
    <event type="alternative splicing"/>
    <isoform>
        <id>Q499Z3-1</id>
        <name>1</name>
        <sequence type="displayed"/>
    </isoform>
    <isoform>
        <id>Q499Z3-2</id>
        <name>2</name>
        <sequence type="described" ref="VSP_024276"/>
    </isoform>
    <isoform>
        <id>Q499Z3-3</id>
        <name>3</name>
        <sequence type="described" ref="VSP_024278"/>
    </isoform>
    <isoform>
        <id>Q499Z3-4</id>
        <name>4</name>
        <sequence type="described" ref="VSP_024275 VSP_024277"/>
    </isoform>
</comment>
<comment type="similarity">
    <text evidence="7">Belongs to the Schlafen family. Subgroup I subfamily.</text>
</comment>
<evidence type="ECO:0000255" key="1"/>
<evidence type="ECO:0000256" key="2">
    <source>
        <dbReference type="SAM" id="MobiDB-lite"/>
    </source>
</evidence>
<evidence type="ECO:0000269" key="3">
    <source>
    </source>
</evidence>
<evidence type="ECO:0000269" key="4">
    <source>
    </source>
</evidence>
<evidence type="ECO:0000303" key="5">
    <source>
    </source>
</evidence>
<evidence type="ECO:0000303" key="6">
    <source>
    </source>
</evidence>
<evidence type="ECO:0000305" key="7"/>
<reference key="1">
    <citation type="journal article" date="2004" name="Nat. Genet.">
        <title>Complete sequencing and characterization of 21,243 full-length human cDNAs.</title>
        <authorList>
            <person name="Ota T."/>
            <person name="Suzuki Y."/>
            <person name="Nishikawa T."/>
            <person name="Otsuki T."/>
            <person name="Sugiyama T."/>
            <person name="Irie R."/>
            <person name="Wakamatsu A."/>
            <person name="Hayashi K."/>
            <person name="Sato H."/>
            <person name="Nagai K."/>
            <person name="Kimura K."/>
            <person name="Makita H."/>
            <person name="Sekine M."/>
            <person name="Obayashi M."/>
            <person name="Nishi T."/>
            <person name="Shibahara T."/>
            <person name="Tanaka T."/>
            <person name="Ishii S."/>
            <person name="Yamamoto J."/>
            <person name="Saito K."/>
            <person name="Kawai Y."/>
            <person name="Isono Y."/>
            <person name="Nakamura Y."/>
            <person name="Nagahari K."/>
            <person name="Murakami K."/>
            <person name="Yasuda T."/>
            <person name="Iwayanagi T."/>
            <person name="Wagatsuma M."/>
            <person name="Shiratori A."/>
            <person name="Sudo H."/>
            <person name="Hosoiri T."/>
            <person name="Kaku Y."/>
            <person name="Kodaira H."/>
            <person name="Kondo H."/>
            <person name="Sugawara M."/>
            <person name="Takahashi M."/>
            <person name="Kanda K."/>
            <person name="Yokoi T."/>
            <person name="Furuya T."/>
            <person name="Kikkawa E."/>
            <person name="Omura Y."/>
            <person name="Abe K."/>
            <person name="Kamihara K."/>
            <person name="Katsuta N."/>
            <person name="Sato K."/>
            <person name="Tanikawa M."/>
            <person name="Yamazaki M."/>
            <person name="Ninomiya K."/>
            <person name="Ishibashi T."/>
            <person name="Yamashita H."/>
            <person name="Murakawa K."/>
            <person name="Fujimori K."/>
            <person name="Tanai H."/>
            <person name="Kimata M."/>
            <person name="Watanabe M."/>
            <person name="Hiraoka S."/>
            <person name="Chiba Y."/>
            <person name="Ishida S."/>
            <person name="Ono Y."/>
            <person name="Takiguchi S."/>
            <person name="Watanabe S."/>
            <person name="Yosida M."/>
            <person name="Hotuta T."/>
            <person name="Kusano J."/>
            <person name="Kanehori K."/>
            <person name="Takahashi-Fujii A."/>
            <person name="Hara H."/>
            <person name="Tanase T.-O."/>
            <person name="Nomura Y."/>
            <person name="Togiya S."/>
            <person name="Komai F."/>
            <person name="Hara R."/>
            <person name="Takeuchi K."/>
            <person name="Arita M."/>
            <person name="Imose N."/>
            <person name="Musashino K."/>
            <person name="Yuuki H."/>
            <person name="Oshima A."/>
            <person name="Sasaki N."/>
            <person name="Aotsuka S."/>
            <person name="Yoshikawa Y."/>
            <person name="Matsunawa H."/>
            <person name="Ichihara T."/>
            <person name="Shiohata N."/>
            <person name="Sano S."/>
            <person name="Moriya S."/>
            <person name="Momiyama H."/>
            <person name="Satoh N."/>
            <person name="Takami S."/>
            <person name="Terashima Y."/>
            <person name="Suzuki O."/>
            <person name="Nakagawa S."/>
            <person name="Senoh A."/>
            <person name="Mizoguchi H."/>
            <person name="Goto Y."/>
            <person name="Shimizu F."/>
            <person name="Wakebe H."/>
            <person name="Hishigaki H."/>
            <person name="Watanabe T."/>
            <person name="Sugiyama A."/>
            <person name="Takemoto M."/>
            <person name="Kawakami B."/>
            <person name="Yamazaki M."/>
            <person name="Watanabe K."/>
            <person name="Kumagai A."/>
            <person name="Itakura S."/>
            <person name="Fukuzumi Y."/>
            <person name="Fujimori Y."/>
            <person name="Komiyama M."/>
            <person name="Tashiro H."/>
            <person name="Tanigami A."/>
            <person name="Fujiwara T."/>
            <person name="Ono T."/>
            <person name="Yamada K."/>
            <person name="Fujii Y."/>
            <person name="Ozaki K."/>
            <person name="Hirao M."/>
            <person name="Ohmori Y."/>
            <person name="Kawabata A."/>
            <person name="Hikiji T."/>
            <person name="Kobatake N."/>
            <person name="Inagaki H."/>
            <person name="Ikema Y."/>
            <person name="Okamoto S."/>
            <person name="Okitani R."/>
            <person name="Kawakami T."/>
            <person name="Noguchi S."/>
            <person name="Itoh T."/>
            <person name="Shigeta K."/>
            <person name="Senba T."/>
            <person name="Matsumura K."/>
            <person name="Nakajima Y."/>
            <person name="Mizuno T."/>
            <person name="Morinaga M."/>
            <person name="Sasaki M."/>
            <person name="Togashi T."/>
            <person name="Oyama M."/>
            <person name="Hata H."/>
            <person name="Watanabe M."/>
            <person name="Komatsu T."/>
            <person name="Mizushima-Sugano J."/>
            <person name="Satoh T."/>
            <person name="Shirai Y."/>
            <person name="Takahashi Y."/>
            <person name="Nakagawa K."/>
            <person name="Okumura K."/>
            <person name="Nagase T."/>
            <person name="Nomura N."/>
            <person name="Kikuchi H."/>
            <person name="Masuho Y."/>
            <person name="Yamashita R."/>
            <person name="Nakai K."/>
            <person name="Yada T."/>
            <person name="Nakamura Y."/>
            <person name="Ohara O."/>
            <person name="Isogai T."/>
            <person name="Sugano S."/>
        </authorList>
    </citation>
    <scope>NUCLEOTIDE SEQUENCE [LARGE SCALE MRNA] (ISOFORMS 1; 2 AND 4)</scope>
    <scope>VARIANT THR-30</scope>
    <source>
        <tissue>Lung</tissue>
        <tissue>Testis</tissue>
    </source>
</reference>
<reference key="2">
    <citation type="journal article" date="2006" name="Nature">
        <title>The DNA sequence and biological annotation of human chromosome 1.</title>
        <authorList>
            <person name="Gregory S.G."/>
            <person name="Barlow K.F."/>
            <person name="McLay K.E."/>
            <person name="Kaul R."/>
            <person name="Swarbreck D."/>
            <person name="Dunham A."/>
            <person name="Scott C.E."/>
            <person name="Howe K.L."/>
            <person name="Woodfine K."/>
            <person name="Spencer C.C.A."/>
            <person name="Jones M.C."/>
            <person name="Gillson C."/>
            <person name="Searle S."/>
            <person name="Zhou Y."/>
            <person name="Kokocinski F."/>
            <person name="McDonald L."/>
            <person name="Evans R."/>
            <person name="Phillips K."/>
            <person name="Atkinson A."/>
            <person name="Cooper R."/>
            <person name="Jones C."/>
            <person name="Hall R.E."/>
            <person name="Andrews T.D."/>
            <person name="Lloyd C."/>
            <person name="Ainscough R."/>
            <person name="Almeida J.P."/>
            <person name="Ambrose K.D."/>
            <person name="Anderson F."/>
            <person name="Andrew R.W."/>
            <person name="Ashwell R.I.S."/>
            <person name="Aubin K."/>
            <person name="Babbage A.K."/>
            <person name="Bagguley C.L."/>
            <person name="Bailey J."/>
            <person name="Beasley H."/>
            <person name="Bethel G."/>
            <person name="Bird C.P."/>
            <person name="Bray-Allen S."/>
            <person name="Brown J.Y."/>
            <person name="Brown A.J."/>
            <person name="Buckley D."/>
            <person name="Burton J."/>
            <person name="Bye J."/>
            <person name="Carder C."/>
            <person name="Chapman J.C."/>
            <person name="Clark S.Y."/>
            <person name="Clarke G."/>
            <person name="Clee C."/>
            <person name="Cobley V."/>
            <person name="Collier R.E."/>
            <person name="Corby N."/>
            <person name="Coville G.J."/>
            <person name="Davies J."/>
            <person name="Deadman R."/>
            <person name="Dunn M."/>
            <person name="Earthrowl M."/>
            <person name="Ellington A.G."/>
            <person name="Errington H."/>
            <person name="Frankish A."/>
            <person name="Frankland J."/>
            <person name="French L."/>
            <person name="Garner P."/>
            <person name="Garnett J."/>
            <person name="Gay L."/>
            <person name="Ghori M.R.J."/>
            <person name="Gibson R."/>
            <person name="Gilby L.M."/>
            <person name="Gillett W."/>
            <person name="Glithero R.J."/>
            <person name="Grafham D.V."/>
            <person name="Griffiths C."/>
            <person name="Griffiths-Jones S."/>
            <person name="Grocock R."/>
            <person name="Hammond S."/>
            <person name="Harrison E.S.I."/>
            <person name="Hart E."/>
            <person name="Haugen E."/>
            <person name="Heath P.D."/>
            <person name="Holmes S."/>
            <person name="Holt K."/>
            <person name="Howden P.J."/>
            <person name="Hunt A.R."/>
            <person name="Hunt S.E."/>
            <person name="Hunter G."/>
            <person name="Isherwood J."/>
            <person name="James R."/>
            <person name="Johnson C."/>
            <person name="Johnson D."/>
            <person name="Joy A."/>
            <person name="Kay M."/>
            <person name="Kershaw J.K."/>
            <person name="Kibukawa M."/>
            <person name="Kimberley A.M."/>
            <person name="King A."/>
            <person name="Knights A.J."/>
            <person name="Lad H."/>
            <person name="Laird G."/>
            <person name="Lawlor S."/>
            <person name="Leongamornlert D.A."/>
            <person name="Lloyd D.M."/>
            <person name="Loveland J."/>
            <person name="Lovell J."/>
            <person name="Lush M.J."/>
            <person name="Lyne R."/>
            <person name="Martin S."/>
            <person name="Mashreghi-Mohammadi M."/>
            <person name="Matthews L."/>
            <person name="Matthews N.S.W."/>
            <person name="McLaren S."/>
            <person name="Milne S."/>
            <person name="Mistry S."/>
            <person name="Moore M.J.F."/>
            <person name="Nickerson T."/>
            <person name="O'Dell C.N."/>
            <person name="Oliver K."/>
            <person name="Palmeiri A."/>
            <person name="Palmer S.A."/>
            <person name="Parker A."/>
            <person name="Patel D."/>
            <person name="Pearce A.V."/>
            <person name="Peck A.I."/>
            <person name="Pelan S."/>
            <person name="Phelps K."/>
            <person name="Phillimore B.J."/>
            <person name="Plumb R."/>
            <person name="Rajan J."/>
            <person name="Raymond C."/>
            <person name="Rouse G."/>
            <person name="Saenphimmachak C."/>
            <person name="Sehra H.K."/>
            <person name="Sheridan E."/>
            <person name="Shownkeen R."/>
            <person name="Sims S."/>
            <person name="Skuce C.D."/>
            <person name="Smith M."/>
            <person name="Steward C."/>
            <person name="Subramanian S."/>
            <person name="Sycamore N."/>
            <person name="Tracey A."/>
            <person name="Tromans A."/>
            <person name="Van Helmond Z."/>
            <person name="Wall M."/>
            <person name="Wallis J.M."/>
            <person name="White S."/>
            <person name="Whitehead S.L."/>
            <person name="Wilkinson J.E."/>
            <person name="Willey D.L."/>
            <person name="Williams H."/>
            <person name="Wilming L."/>
            <person name="Wray P.W."/>
            <person name="Wu Z."/>
            <person name="Coulson A."/>
            <person name="Vaudin M."/>
            <person name="Sulston J.E."/>
            <person name="Durbin R.M."/>
            <person name="Hubbard T."/>
            <person name="Wooster R."/>
            <person name="Dunham I."/>
            <person name="Carter N.P."/>
            <person name="McVean G."/>
            <person name="Ross M.T."/>
            <person name="Harrow J."/>
            <person name="Olson M.V."/>
            <person name="Beck S."/>
            <person name="Rogers J."/>
            <person name="Bentley D.R."/>
        </authorList>
    </citation>
    <scope>NUCLEOTIDE SEQUENCE [LARGE SCALE GENOMIC DNA]</scope>
</reference>
<reference key="3">
    <citation type="journal article" date="2004" name="Genome Res.">
        <title>The status, quality, and expansion of the NIH full-length cDNA project: the Mammalian Gene Collection (MGC).</title>
        <authorList>
            <consortium name="The MGC Project Team"/>
        </authorList>
    </citation>
    <scope>NUCLEOTIDE SEQUENCE [LARGE SCALE MRNA] (ISOFORMS 1 AND 3)</scope>
    <scope>VARIANT SER-128</scope>
    <source>
        <tissue>Brain</tissue>
        <tissue>Testis</tissue>
    </source>
</reference>
<sequence length="407" mass="45603">MTPMKRSVQTQVSEPFMESWGEESLPELPAEQSLTEYSDLEEAPSAHTLYVGHLNPQFSVPVLACLLRDTLERLEMPVAREHIEVVRRPRKAYALVQVTVHRDTLASLPWRLQTALEEHLILKELAARGKDLLLSEAQGPFSHREEKEEEEEDSGLSPGPSPGSGVPLPTWPTHTLPDRPQAQQLQSCQGRPSGVCSDSAIVHQQIVGKDQLFQGAFLGSETRNMEFKRGSGEYLSLAFKHHVRRYVCAFLNSEGGSLLVGVEDSGLVQGIRCSHRDEDRARLLVDSILQGFKPQIFPDAYTLTFIPVISTSETSVPLKVIRLTVHTPKAQSQPQLYQTDQGEVFLRRDGSIQGPLSASAIQEWCRQRWLVELGKLEEKMKALMMEKEQLQQQLQQHGPVSCTCCVL</sequence>
<keyword id="KW-0025">Alternative splicing</keyword>
<keyword id="KW-0067">ATP-binding</keyword>
<keyword id="KW-0175">Coiled coil</keyword>
<keyword id="KW-0547">Nucleotide-binding</keyword>
<keyword id="KW-1267">Proteomics identification</keyword>
<keyword id="KW-1185">Reference proteome</keyword>
<proteinExistence type="evidence at protein level"/>